<organism>
    <name type="scientific">Brucella canis (strain ATCC 23365 / NCTC 10854 / RM-666)</name>
    <dbReference type="NCBI Taxonomy" id="483179"/>
    <lineage>
        <taxon>Bacteria</taxon>
        <taxon>Pseudomonadati</taxon>
        <taxon>Pseudomonadota</taxon>
        <taxon>Alphaproteobacteria</taxon>
        <taxon>Hyphomicrobiales</taxon>
        <taxon>Brucellaceae</taxon>
        <taxon>Brucella/Ochrobactrum group</taxon>
        <taxon>Brucella</taxon>
    </lineage>
</organism>
<gene>
    <name type="ordered locus">BCAN_A1830</name>
</gene>
<keyword id="KW-0413">Isomerase</keyword>
<keyword id="KW-1185">Reference proteome</keyword>
<proteinExistence type="inferred from homology"/>
<reference key="1">
    <citation type="submission" date="2007-10" db="EMBL/GenBank/DDBJ databases">
        <title>Brucella canis ATCC 23365 whole genome shotgun sequencing project.</title>
        <authorList>
            <person name="Setubal J.C."/>
            <person name="Bowns C."/>
            <person name="Boyle S."/>
            <person name="Crasta O.R."/>
            <person name="Czar M.J."/>
            <person name="Dharmanolla C."/>
            <person name="Gillespie J.J."/>
            <person name="Kenyon R.W."/>
            <person name="Lu J."/>
            <person name="Mane S."/>
            <person name="Mohapatra S."/>
            <person name="Nagrani S."/>
            <person name="Purkayastha A."/>
            <person name="Rajasimha H.K."/>
            <person name="Shallom J.M."/>
            <person name="Shallom S."/>
            <person name="Shukla M."/>
            <person name="Snyder E.E."/>
            <person name="Sobral B.W."/>
            <person name="Wattam A.R."/>
            <person name="Will R."/>
            <person name="Williams K."/>
            <person name="Yoo H."/>
            <person name="Bruce D."/>
            <person name="Detter C."/>
            <person name="Munk C."/>
            <person name="Brettin T.S."/>
        </authorList>
    </citation>
    <scope>NUCLEOTIDE SEQUENCE [LARGE SCALE GENOMIC DNA]</scope>
    <source>
        <strain>ATCC 23365 / NCTC 10854 / RM-666</strain>
    </source>
</reference>
<accession>A9M832</accession>
<protein>
    <recommendedName>
        <fullName>4-hydroxyproline epimerase</fullName>
        <ecNumber>5.1.1.8</ecNumber>
    </recommendedName>
    <alternativeName>
        <fullName>Hydroxyproline-2-epimerase</fullName>
        <shortName>HyPRE</shortName>
    </alternativeName>
</protein>
<dbReference type="EC" id="5.1.1.8"/>
<dbReference type="EMBL" id="CP000872">
    <property type="protein sequence ID" value="ABX62830.1"/>
    <property type="molecule type" value="Genomic_DNA"/>
</dbReference>
<dbReference type="RefSeq" id="WP_004690494.1">
    <property type="nucleotide sequence ID" value="NC_010103.1"/>
</dbReference>
<dbReference type="SMR" id="A9M832"/>
<dbReference type="KEGG" id="bcs:BCAN_A1830"/>
<dbReference type="HOGENOM" id="CLU_036729_0_0_5"/>
<dbReference type="PhylomeDB" id="A9M832"/>
<dbReference type="Proteomes" id="UP000001385">
    <property type="component" value="Chromosome I"/>
</dbReference>
<dbReference type="GO" id="GO:0047580">
    <property type="term" value="F:4-hydroxyproline epimerase activity"/>
    <property type="evidence" value="ECO:0007669"/>
    <property type="project" value="UniProtKB-EC"/>
</dbReference>
<dbReference type="FunFam" id="3.10.310.10:FF:000005">
    <property type="entry name" value="Proline racemase"/>
    <property type="match status" value="1"/>
</dbReference>
<dbReference type="Gene3D" id="3.10.310.10">
    <property type="entry name" value="Diaminopimelate Epimerase, Chain A, domain 1"/>
    <property type="match status" value="2"/>
</dbReference>
<dbReference type="InterPro" id="IPR008794">
    <property type="entry name" value="Pro_racemase_fam"/>
</dbReference>
<dbReference type="NCBIfam" id="NF010578">
    <property type="entry name" value="PRK13971.1"/>
    <property type="match status" value="1"/>
</dbReference>
<dbReference type="PANTHER" id="PTHR33442">
    <property type="entry name" value="TRANS-3-HYDROXY-L-PROLINE DEHYDRATASE"/>
    <property type="match status" value="1"/>
</dbReference>
<dbReference type="PANTHER" id="PTHR33442:SF1">
    <property type="entry name" value="TRANS-3-HYDROXY-L-PROLINE DEHYDRATASE"/>
    <property type="match status" value="1"/>
</dbReference>
<dbReference type="Pfam" id="PF05544">
    <property type="entry name" value="Pro_racemase"/>
    <property type="match status" value="1"/>
</dbReference>
<dbReference type="PIRSF" id="PIRSF029792">
    <property type="entry name" value="Pro_racemase"/>
    <property type="match status" value="1"/>
</dbReference>
<dbReference type="SFLD" id="SFLDS00028">
    <property type="entry name" value="Proline_Racemase"/>
    <property type="match status" value="1"/>
</dbReference>
<dbReference type="SUPFAM" id="SSF54506">
    <property type="entry name" value="Diaminopimelate epimerase-like"/>
    <property type="match status" value="1"/>
</dbReference>
<sequence length="333" mass="36592">MARHSFFCVDGHTCGNPVRLVAGGGPNLNGSTMMEKRAHFLAEYDWIRTGLMFEPRGHDMMSGSILYPPTRPDCDVAVLFIETSGCLPMCGHGTIGTVTMAIEQGLVTPKTPGKLNLDTPAGLVAIEYEQDGQYVERVRLTNVPAFLYAEGLEVECPDLGPIKVDVAYGGNFYAIVEPQENYTDMDDYSALQLIAWSPVLRQRLNEKYKFQHPELPDINRLSHILWTGKPKHPQAHARNAVFYGDKAIDRSPCGTGTSARMAQLAAKGKLKPGDEFIHESIIGSLFHGRVERAAEVAGRPAIVPSIAGWARMTGYNTIFIDDRDPFAHGFSVA</sequence>
<name>4HYPE_BRUC2</name>
<comment type="function">
    <text evidence="1">Allows intracellular utilization of 4-hydroxyproline, one of the major constituents of host collagen, by converting 4-hydroxy-L-proline to 4-hydroxy-D-proline, which can be further metabolized by intracellular 4-hydroxy-D-proline oxidases. Strong B-cell mitogen. Plays an important role in the regulation of intra- and extracellular amino acid pools, allowing the bacterium to profit from host precursors and enzymatic pathways (By similarity).</text>
</comment>
<comment type="catalytic activity">
    <reaction>
        <text>trans-4-hydroxy-L-proline = cis-4-hydroxy-D-proline</text>
        <dbReference type="Rhea" id="RHEA:21152"/>
        <dbReference type="ChEBI" id="CHEBI:57690"/>
        <dbReference type="ChEBI" id="CHEBI:58375"/>
        <dbReference type="EC" id="5.1.1.8"/>
    </reaction>
</comment>
<comment type="subunit">
    <text evidence="1">Homodimer.</text>
</comment>
<comment type="similarity">
    <text evidence="3">Belongs to the proline racemase family.</text>
</comment>
<evidence type="ECO:0000250" key="1"/>
<evidence type="ECO:0000250" key="2">
    <source>
        <dbReference type="UniProtKB" id="Q4KGU2"/>
    </source>
</evidence>
<evidence type="ECO:0000305" key="3"/>
<feature type="chain" id="PRO_0000354028" description="4-hydroxyproline epimerase">
    <location>
        <begin position="1"/>
        <end position="333"/>
    </location>
</feature>
<feature type="active site" description="Proton acceptor" evidence="2">
    <location>
        <position position="90"/>
    </location>
</feature>
<feature type="active site" description="Proton donor" evidence="2">
    <location>
        <position position="253"/>
    </location>
</feature>
<feature type="binding site" evidence="2">
    <location>
        <begin position="91"/>
        <end position="92"/>
    </location>
    <ligand>
        <name>substrate</name>
    </ligand>
</feature>
<feature type="binding site" evidence="2">
    <location>
        <position position="249"/>
    </location>
    <ligand>
        <name>substrate</name>
    </ligand>
</feature>
<feature type="binding site" evidence="2">
    <location>
        <begin position="254"/>
        <end position="255"/>
    </location>
    <ligand>
        <name>substrate</name>
    </ligand>
</feature>